<sequence>MAVFLEAKDAHSVLKRFPRANEFLEELRQGTIERECMEEICSYEEVKEVFENKEKTMEFWKGYPNAVYSVRDPSQSSDAMYVVVPLLGVALLIVIALFIIWRCQLQKATRHHPSYAQNRYLASRAGHTLPRVMVYRGTVHSQGEPSGHREAANSPQVVLGPSRGGRTTVRLESTLYLPELSLSRLSSTTPPPSYEEVTAPQESSSEEASVSYSDPPPKYEEIVAANPGADK</sequence>
<dbReference type="EMBL" id="AF326350">
    <property type="protein sequence ID" value="AAK00955.1"/>
    <property type="molecule type" value="mRNA"/>
</dbReference>
<dbReference type="EMBL" id="AK074574">
    <property type="protein sequence ID" value="BAC11069.1"/>
    <property type="molecule type" value="mRNA"/>
</dbReference>
<dbReference type="EMBL" id="CH471169">
    <property type="protein sequence ID" value="EAW99407.1"/>
    <property type="molecule type" value="Genomic_DNA"/>
</dbReference>
<dbReference type="EMBL" id="BC128256">
    <property type="protein sequence ID" value="AAI28257.1"/>
    <property type="molecule type" value="mRNA"/>
</dbReference>
<dbReference type="EMBL" id="BC128409">
    <property type="protein sequence ID" value="AAI28410.1"/>
    <property type="molecule type" value="mRNA"/>
</dbReference>
<dbReference type="CCDS" id="CCDS14699.1"/>
<dbReference type="RefSeq" id="NP_001359092.1">
    <property type="nucleotide sequence ID" value="NM_001372163.1"/>
</dbReference>
<dbReference type="RefSeq" id="NP_076987.3">
    <property type="nucleotide sequence ID" value="NM_024082.3"/>
</dbReference>
<dbReference type="RefSeq" id="XP_005274804.1">
    <property type="nucleotide sequence ID" value="XM_005274747.3"/>
</dbReference>
<dbReference type="RefSeq" id="XP_011529499.1">
    <property type="nucleotide sequence ID" value="XM_011531197.2"/>
</dbReference>
<dbReference type="SMR" id="Q9BZD7"/>
<dbReference type="BioGRID" id="122515">
    <property type="interactions" value="12"/>
</dbReference>
<dbReference type="FunCoup" id="Q9BZD7">
    <property type="interactions" value="79"/>
</dbReference>
<dbReference type="IntAct" id="Q9BZD7">
    <property type="interactions" value="3"/>
</dbReference>
<dbReference type="STRING" id="9606.ENSP00000359378"/>
<dbReference type="iPTMnet" id="Q9BZD7"/>
<dbReference type="PhosphoSitePlus" id="Q9BZD7"/>
<dbReference type="BioMuta" id="PRRG3"/>
<dbReference type="DMDM" id="209572687"/>
<dbReference type="MassIVE" id="Q9BZD7"/>
<dbReference type="PaxDb" id="9606-ENSP00000359378"/>
<dbReference type="PeptideAtlas" id="Q9BZD7"/>
<dbReference type="Antibodypedia" id="30695">
    <property type="antibodies" value="122 antibodies from 21 providers"/>
</dbReference>
<dbReference type="DNASU" id="79057"/>
<dbReference type="Ensembl" id="ENST00000370353.3">
    <property type="protein sequence ID" value="ENSP00000359378.3"/>
    <property type="gene ID" value="ENSG00000130032.17"/>
</dbReference>
<dbReference type="Ensembl" id="ENST00000538575.5">
    <property type="protein sequence ID" value="ENSP00000440217.1"/>
    <property type="gene ID" value="ENSG00000130032.17"/>
</dbReference>
<dbReference type="Ensembl" id="ENST00000674457.1">
    <property type="protein sequence ID" value="ENSP00000501544.1"/>
    <property type="gene ID" value="ENSG00000130032.17"/>
</dbReference>
<dbReference type="GeneID" id="79057"/>
<dbReference type="KEGG" id="hsa:79057"/>
<dbReference type="MANE-Select" id="ENST00000674457.1">
    <property type="protein sequence ID" value="ENSP00000501544.1"/>
    <property type="RefSeq nucleotide sequence ID" value="NM_001372163.1"/>
    <property type="RefSeq protein sequence ID" value="NP_001359092.1"/>
</dbReference>
<dbReference type="UCSC" id="uc004few.3">
    <property type="organism name" value="human"/>
</dbReference>
<dbReference type="AGR" id="HGNC:30798"/>
<dbReference type="CTD" id="79057"/>
<dbReference type="GeneCards" id="PRRG3"/>
<dbReference type="HGNC" id="HGNC:30798">
    <property type="gene designation" value="PRRG3"/>
</dbReference>
<dbReference type="HPA" id="ENSG00000130032">
    <property type="expression patterns" value="Tissue enhanced (brain, epididymis)"/>
</dbReference>
<dbReference type="MIM" id="300685">
    <property type="type" value="gene"/>
</dbReference>
<dbReference type="neXtProt" id="NX_Q9BZD7"/>
<dbReference type="OpenTargets" id="ENSG00000130032"/>
<dbReference type="PharmGKB" id="PA134963933"/>
<dbReference type="VEuPathDB" id="HostDB:ENSG00000130032"/>
<dbReference type="eggNOG" id="ENOG502RXJN">
    <property type="taxonomic scope" value="Eukaryota"/>
</dbReference>
<dbReference type="GeneTree" id="ENSGT00940000160946"/>
<dbReference type="HOGENOM" id="CLU_103591_0_0_1"/>
<dbReference type="InParanoid" id="Q9BZD7"/>
<dbReference type="OMA" id="MVYRETS"/>
<dbReference type="OrthoDB" id="9379732at2759"/>
<dbReference type="PAN-GO" id="Q9BZD7">
    <property type="GO annotations" value="1 GO annotation based on evolutionary models"/>
</dbReference>
<dbReference type="PhylomeDB" id="Q9BZD7"/>
<dbReference type="TreeFam" id="TF332123"/>
<dbReference type="PathwayCommons" id="Q9BZD7"/>
<dbReference type="SignaLink" id="Q9BZD7"/>
<dbReference type="BioGRID-ORCS" id="79057">
    <property type="hits" value="10 hits in 761 CRISPR screens"/>
</dbReference>
<dbReference type="GenomeRNAi" id="79057"/>
<dbReference type="Pharos" id="Q9BZD7">
    <property type="development level" value="Tbio"/>
</dbReference>
<dbReference type="PRO" id="PR:Q9BZD7"/>
<dbReference type="Proteomes" id="UP000005640">
    <property type="component" value="Chromosome X"/>
</dbReference>
<dbReference type="RNAct" id="Q9BZD7">
    <property type="molecule type" value="protein"/>
</dbReference>
<dbReference type="Bgee" id="ENSG00000130032">
    <property type="expression patterns" value="Expressed in sural nerve and 129 other cell types or tissues"/>
</dbReference>
<dbReference type="ExpressionAtlas" id="Q9BZD7">
    <property type="expression patterns" value="baseline and differential"/>
</dbReference>
<dbReference type="GO" id="GO:0005615">
    <property type="term" value="C:extracellular space"/>
    <property type="evidence" value="ECO:0000318"/>
    <property type="project" value="GO_Central"/>
</dbReference>
<dbReference type="GO" id="GO:0016020">
    <property type="term" value="C:membrane"/>
    <property type="evidence" value="ECO:0000303"/>
    <property type="project" value="UniProtKB"/>
</dbReference>
<dbReference type="GO" id="GO:0005509">
    <property type="term" value="F:calcium ion binding"/>
    <property type="evidence" value="ECO:0007669"/>
    <property type="project" value="InterPro"/>
</dbReference>
<dbReference type="GO" id="GO:0004252">
    <property type="term" value="F:serine-type endopeptidase activity"/>
    <property type="evidence" value="ECO:0000318"/>
    <property type="project" value="GO_Central"/>
</dbReference>
<dbReference type="GO" id="GO:0007596">
    <property type="term" value="P:blood coagulation"/>
    <property type="evidence" value="ECO:0000318"/>
    <property type="project" value="GO_Central"/>
</dbReference>
<dbReference type="FunFam" id="4.10.740.10:FF:000001">
    <property type="entry name" value="vitamin K-dependent protein S"/>
    <property type="match status" value="1"/>
</dbReference>
<dbReference type="Gene3D" id="4.10.740.10">
    <property type="entry name" value="Coagulation Factor IX"/>
    <property type="match status" value="1"/>
</dbReference>
<dbReference type="InterPro" id="IPR017857">
    <property type="entry name" value="Coagulation_fac-like_Gla_dom"/>
</dbReference>
<dbReference type="InterPro" id="IPR035972">
    <property type="entry name" value="GLA-like_dom_SF"/>
</dbReference>
<dbReference type="InterPro" id="IPR000294">
    <property type="entry name" value="GLA_domain"/>
</dbReference>
<dbReference type="InterPro" id="IPR050442">
    <property type="entry name" value="Peptidase_S1_coag_factors"/>
</dbReference>
<dbReference type="PANTHER" id="PTHR24278">
    <property type="entry name" value="COAGULATION FACTOR"/>
    <property type="match status" value="1"/>
</dbReference>
<dbReference type="PANTHER" id="PTHR24278:SF39">
    <property type="entry name" value="TRANSMEMBRANE GAMMA-CARBOXYGLUTAMIC ACID PROTEIN 3"/>
    <property type="match status" value="1"/>
</dbReference>
<dbReference type="Pfam" id="PF00594">
    <property type="entry name" value="Gla"/>
    <property type="match status" value="1"/>
</dbReference>
<dbReference type="PRINTS" id="PR00001">
    <property type="entry name" value="GLABLOOD"/>
</dbReference>
<dbReference type="SMART" id="SM00069">
    <property type="entry name" value="GLA"/>
    <property type="match status" value="1"/>
</dbReference>
<dbReference type="SUPFAM" id="SSF57630">
    <property type="entry name" value="GLA-domain"/>
    <property type="match status" value="1"/>
</dbReference>
<dbReference type="PROSITE" id="PS00011">
    <property type="entry name" value="GLA_1"/>
    <property type="match status" value="1"/>
</dbReference>
<dbReference type="PROSITE" id="PS50998">
    <property type="entry name" value="GLA_2"/>
    <property type="match status" value="1"/>
</dbReference>
<keyword id="KW-1015">Disulfide bond</keyword>
<keyword id="KW-0301">Gamma-carboxyglutamic acid</keyword>
<keyword id="KW-0472">Membrane</keyword>
<keyword id="KW-1267">Proteomics identification</keyword>
<keyword id="KW-1185">Reference proteome</keyword>
<keyword id="KW-0812">Transmembrane</keyword>
<keyword id="KW-1133">Transmembrane helix</keyword>
<feature type="propeptide" id="PRO_0000022547" evidence="1">
    <location>
        <begin position="1"/>
        <end position="19"/>
    </location>
</feature>
<feature type="chain" id="PRO_0000022548" description="Transmembrane gamma-carboxyglutamic acid protein 3">
    <location>
        <begin position="20"/>
        <end position="231"/>
    </location>
</feature>
<feature type="topological domain" description="Extracellular" evidence="1">
    <location>
        <begin position="20"/>
        <end position="78"/>
    </location>
</feature>
<feature type="transmembrane region" description="Helical" evidence="1">
    <location>
        <begin position="79"/>
        <end position="101"/>
    </location>
</feature>
<feature type="topological domain" description="Cytoplasmic" evidence="1">
    <location>
        <begin position="102"/>
        <end position="231"/>
    </location>
</feature>
<feature type="domain" description="Gla" evidence="2">
    <location>
        <begin position="20"/>
        <end position="65"/>
    </location>
</feature>
<feature type="region of interest" description="Disordered" evidence="3">
    <location>
        <begin position="140"/>
        <end position="165"/>
    </location>
</feature>
<feature type="region of interest" description="Disordered" evidence="3">
    <location>
        <begin position="182"/>
        <end position="231"/>
    </location>
</feature>
<feature type="compositionally biased region" description="Low complexity" evidence="3">
    <location>
        <begin position="202"/>
        <end position="213"/>
    </location>
</feature>
<feature type="modified residue" description="4-carboxyglutamate" evidence="2">
    <location>
        <position position="22"/>
    </location>
</feature>
<feature type="modified residue" description="4-carboxyglutamate" evidence="2">
    <location>
        <position position="25"/>
    </location>
</feature>
<feature type="modified residue" description="4-carboxyglutamate" evidence="2">
    <location>
        <position position="26"/>
    </location>
</feature>
<feature type="modified residue" description="4-carboxyglutamate" evidence="2">
    <location>
        <position position="33"/>
    </location>
</feature>
<feature type="modified residue" description="4-carboxyglutamate" evidence="2">
    <location>
        <position position="35"/>
    </location>
</feature>
<feature type="modified residue" description="4-carboxyglutamate" evidence="2">
    <location>
        <position position="38"/>
    </location>
</feature>
<feature type="modified residue" description="4-carboxyglutamate" evidence="2">
    <location>
        <position position="39"/>
    </location>
</feature>
<feature type="modified residue" description="4-carboxyglutamate" evidence="2">
    <location>
        <position position="44"/>
    </location>
</feature>
<feature type="modified residue" description="4-carboxyglutamate" evidence="2">
    <location>
        <position position="45"/>
    </location>
</feature>
<feature type="modified residue" description="4-carboxyglutamate" evidence="2">
    <location>
        <position position="48"/>
    </location>
</feature>
<feature type="modified residue" description="4-carboxyglutamate" evidence="2">
    <location>
        <position position="51"/>
    </location>
</feature>
<feature type="modified residue" description="4-carboxyglutamate" evidence="2">
    <location>
        <position position="54"/>
    </location>
</feature>
<feature type="modified residue" description="4-carboxyglutamate" evidence="2">
    <location>
        <position position="58"/>
    </location>
</feature>
<feature type="disulfide bond" evidence="2">
    <location>
        <begin position="36"/>
        <end position="41"/>
    </location>
</feature>
<feature type="sequence variant" id="VAR_046712" description="In dbSNP:rs4323608." evidence="4 5 6 7">
    <original>N</original>
    <variation>S</variation>
    <location>
        <position position="153"/>
    </location>
</feature>
<feature type="sequence conflict" description="In Ref. 2; BAC11069." evidence="8" ref="2">
    <original>T</original>
    <variation>P</variation>
    <location>
        <position position="189"/>
    </location>
</feature>
<protein>
    <recommendedName>
        <fullName>Transmembrane gamma-carboxyglutamic acid protein 3</fullName>
    </recommendedName>
    <alternativeName>
        <fullName>Proline-rich gamma-carboxyglutamic acid protein 3</fullName>
        <shortName>Proline-rich Gla protein 3</shortName>
    </alternativeName>
</protein>
<organism>
    <name type="scientific">Homo sapiens</name>
    <name type="common">Human</name>
    <dbReference type="NCBI Taxonomy" id="9606"/>
    <lineage>
        <taxon>Eukaryota</taxon>
        <taxon>Metazoa</taxon>
        <taxon>Chordata</taxon>
        <taxon>Craniata</taxon>
        <taxon>Vertebrata</taxon>
        <taxon>Euteleostomi</taxon>
        <taxon>Mammalia</taxon>
        <taxon>Eutheria</taxon>
        <taxon>Euarchontoglires</taxon>
        <taxon>Primates</taxon>
        <taxon>Haplorrhini</taxon>
        <taxon>Catarrhini</taxon>
        <taxon>Hominidae</taxon>
        <taxon>Homo</taxon>
    </lineage>
</organism>
<evidence type="ECO:0000255" key="1"/>
<evidence type="ECO:0000255" key="2">
    <source>
        <dbReference type="PROSITE-ProRule" id="PRU00463"/>
    </source>
</evidence>
<evidence type="ECO:0000256" key="3">
    <source>
        <dbReference type="SAM" id="MobiDB-lite"/>
    </source>
</evidence>
<evidence type="ECO:0000269" key="4">
    <source>
    </source>
</evidence>
<evidence type="ECO:0000269" key="5">
    <source>
    </source>
</evidence>
<evidence type="ECO:0000269" key="6">
    <source>
    </source>
</evidence>
<evidence type="ECO:0000269" key="7">
    <source ref="3"/>
</evidence>
<evidence type="ECO:0000305" key="8"/>
<reference key="1">
    <citation type="journal article" date="2001" name="Proc. Natl. Acad. Sci. U.S.A.">
        <title>Identification of two novel transmembrane gamma-carboxyglutamic acid proteins expressed broadly in fetal and adult tissues.</title>
        <authorList>
            <person name="Kulman J.D."/>
            <person name="Harris J.E."/>
            <person name="Xie L."/>
            <person name="Davie E.W."/>
        </authorList>
    </citation>
    <scope>NUCLEOTIDE SEQUENCE [MRNA]</scope>
    <scope>VARIANT SER-153</scope>
    <scope>TISSUE SPECIFICITY</scope>
    <source>
        <tissue>Spinal cord</tissue>
    </source>
</reference>
<reference key="2">
    <citation type="journal article" date="2004" name="Nat. Genet.">
        <title>Complete sequencing and characterization of 21,243 full-length human cDNAs.</title>
        <authorList>
            <person name="Ota T."/>
            <person name="Suzuki Y."/>
            <person name="Nishikawa T."/>
            <person name="Otsuki T."/>
            <person name="Sugiyama T."/>
            <person name="Irie R."/>
            <person name="Wakamatsu A."/>
            <person name="Hayashi K."/>
            <person name="Sato H."/>
            <person name="Nagai K."/>
            <person name="Kimura K."/>
            <person name="Makita H."/>
            <person name="Sekine M."/>
            <person name="Obayashi M."/>
            <person name="Nishi T."/>
            <person name="Shibahara T."/>
            <person name="Tanaka T."/>
            <person name="Ishii S."/>
            <person name="Yamamoto J."/>
            <person name="Saito K."/>
            <person name="Kawai Y."/>
            <person name="Isono Y."/>
            <person name="Nakamura Y."/>
            <person name="Nagahari K."/>
            <person name="Murakami K."/>
            <person name="Yasuda T."/>
            <person name="Iwayanagi T."/>
            <person name="Wagatsuma M."/>
            <person name="Shiratori A."/>
            <person name="Sudo H."/>
            <person name="Hosoiri T."/>
            <person name="Kaku Y."/>
            <person name="Kodaira H."/>
            <person name="Kondo H."/>
            <person name="Sugawara M."/>
            <person name="Takahashi M."/>
            <person name="Kanda K."/>
            <person name="Yokoi T."/>
            <person name="Furuya T."/>
            <person name="Kikkawa E."/>
            <person name="Omura Y."/>
            <person name="Abe K."/>
            <person name="Kamihara K."/>
            <person name="Katsuta N."/>
            <person name="Sato K."/>
            <person name="Tanikawa M."/>
            <person name="Yamazaki M."/>
            <person name="Ninomiya K."/>
            <person name="Ishibashi T."/>
            <person name="Yamashita H."/>
            <person name="Murakawa K."/>
            <person name="Fujimori K."/>
            <person name="Tanai H."/>
            <person name="Kimata M."/>
            <person name="Watanabe M."/>
            <person name="Hiraoka S."/>
            <person name="Chiba Y."/>
            <person name="Ishida S."/>
            <person name="Ono Y."/>
            <person name="Takiguchi S."/>
            <person name="Watanabe S."/>
            <person name="Yosida M."/>
            <person name="Hotuta T."/>
            <person name="Kusano J."/>
            <person name="Kanehori K."/>
            <person name="Takahashi-Fujii A."/>
            <person name="Hara H."/>
            <person name="Tanase T.-O."/>
            <person name="Nomura Y."/>
            <person name="Togiya S."/>
            <person name="Komai F."/>
            <person name="Hara R."/>
            <person name="Takeuchi K."/>
            <person name="Arita M."/>
            <person name="Imose N."/>
            <person name="Musashino K."/>
            <person name="Yuuki H."/>
            <person name="Oshima A."/>
            <person name="Sasaki N."/>
            <person name="Aotsuka S."/>
            <person name="Yoshikawa Y."/>
            <person name="Matsunawa H."/>
            <person name="Ichihara T."/>
            <person name="Shiohata N."/>
            <person name="Sano S."/>
            <person name="Moriya S."/>
            <person name="Momiyama H."/>
            <person name="Satoh N."/>
            <person name="Takami S."/>
            <person name="Terashima Y."/>
            <person name="Suzuki O."/>
            <person name="Nakagawa S."/>
            <person name="Senoh A."/>
            <person name="Mizoguchi H."/>
            <person name="Goto Y."/>
            <person name="Shimizu F."/>
            <person name="Wakebe H."/>
            <person name="Hishigaki H."/>
            <person name="Watanabe T."/>
            <person name="Sugiyama A."/>
            <person name="Takemoto M."/>
            <person name="Kawakami B."/>
            <person name="Yamazaki M."/>
            <person name="Watanabe K."/>
            <person name="Kumagai A."/>
            <person name="Itakura S."/>
            <person name="Fukuzumi Y."/>
            <person name="Fujimori Y."/>
            <person name="Komiyama M."/>
            <person name="Tashiro H."/>
            <person name="Tanigami A."/>
            <person name="Fujiwara T."/>
            <person name="Ono T."/>
            <person name="Yamada K."/>
            <person name="Fujii Y."/>
            <person name="Ozaki K."/>
            <person name="Hirao M."/>
            <person name="Ohmori Y."/>
            <person name="Kawabata A."/>
            <person name="Hikiji T."/>
            <person name="Kobatake N."/>
            <person name="Inagaki H."/>
            <person name="Ikema Y."/>
            <person name="Okamoto S."/>
            <person name="Okitani R."/>
            <person name="Kawakami T."/>
            <person name="Noguchi S."/>
            <person name="Itoh T."/>
            <person name="Shigeta K."/>
            <person name="Senba T."/>
            <person name="Matsumura K."/>
            <person name="Nakajima Y."/>
            <person name="Mizuno T."/>
            <person name="Morinaga M."/>
            <person name="Sasaki M."/>
            <person name="Togashi T."/>
            <person name="Oyama M."/>
            <person name="Hata H."/>
            <person name="Watanabe M."/>
            <person name="Komatsu T."/>
            <person name="Mizushima-Sugano J."/>
            <person name="Satoh T."/>
            <person name="Shirai Y."/>
            <person name="Takahashi Y."/>
            <person name="Nakagawa K."/>
            <person name="Okumura K."/>
            <person name="Nagase T."/>
            <person name="Nomura N."/>
            <person name="Kikuchi H."/>
            <person name="Masuho Y."/>
            <person name="Yamashita R."/>
            <person name="Nakai K."/>
            <person name="Yada T."/>
            <person name="Nakamura Y."/>
            <person name="Ohara O."/>
            <person name="Isogai T."/>
            <person name="Sugano S."/>
        </authorList>
    </citation>
    <scope>NUCLEOTIDE SEQUENCE [LARGE SCALE MRNA]</scope>
    <scope>VARIANT SER-153</scope>
    <source>
        <tissue>Embryo</tissue>
    </source>
</reference>
<reference key="3">
    <citation type="submission" date="2005-07" db="EMBL/GenBank/DDBJ databases">
        <authorList>
            <person name="Mural R.J."/>
            <person name="Istrail S."/>
            <person name="Sutton G.G."/>
            <person name="Florea L."/>
            <person name="Halpern A.L."/>
            <person name="Mobarry C.M."/>
            <person name="Lippert R."/>
            <person name="Walenz B."/>
            <person name="Shatkay H."/>
            <person name="Dew I."/>
            <person name="Miller J.R."/>
            <person name="Flanigan M.J."/>
            <person name="Edwards N.J."/>
            <person name="Bolanos R."/>
            <person name="Fasulo D."/>
            <person name="Halldorsson B.V."/>
            <person name="Hannenhalli S."/>
            <person name="Turner R."/>
            <person name="Yooseph S."/>
            <person name="Lu F."/>
            <person name="Nusskern D.R."/>
            <person name="Shue B.C."/>
            <person name="Zheng X.H."/>
            <person name="Zhong F."/>
            <person name="Delcher A.L."/>
            <person name="Huson D.H."/>
            <person name="Kravitz S.A."/>
            <person name="Mouchard L."/>
            <person name="Reinert K."/>
            <person name="Remington K.A."/>
            <person name="Clark A.G."/>
            <person name="Waterman M.S."/>
            <person name="Eichler E.E."/>
            <person name="Adams M.D."/>
            <person name="Hunkapiller M.W."/>
            <person name="Myers E.W."/>
            <person name="Venter J.C."/>
        </authorList>
    </citation>
    <scope>NUCLEOTIDE SEQUENCE [LARGE SCALE GENOMIC DNA]</scope>
    <scope>VARIANT SER-153</scope>
</reference>
<reference key="4">
    <citation type="journal article" date="2004" name="Genome Res.">
        <title>The status, quality, and expansion of the NIH full-length cDNA project: the Mammalian Gene Collection (MGC).</title>
        <authorList>
            <consortium name="The MGC Project Team"/>
        </authorList>
    </citation>
    <scope>NUCLEOTIDE SEQUENCE [LARGE SCALE MRNA]</scope>
    <scope>VARIANT SER-153</scope>
</reference>
<accession>Q9BZD7</accession>
<accession>A1A523</accession>
<accession>A1A575</accession>
<accession>Q8N2N6</accession>
<proteinExistence type="evidence at protein level"/>
<name>TMG3_HUMAN</name>
<gene>
    <name type="primary">PRRG3</name>
    <name type="synonym">PRGP3</name>
    <name type="synonym">TMG3</name>
</gene>
<comment type="subcellular location">
    <subcellularLocation>
        <location>Membrane</location>
        <topology>Single-pass type I membrane protein</topology>
    </subcellularLocation>
</comment>
<comment type="tissue specificity">
    <text evidence="4">Expressed in brain, lung, kidney and heart.</text>
</comment>
<comment type="PTM">
    <text>Gla residues are produced after subsequent post-translational modifications of glutamate by a vitamin K-dependent gamma-carboxylase.</text>
</comment>